<comment type="miscellaneous">
    <text>On the 2D-gel the determined pI of this unknown protein is: 6.7, its MW is: 34.5 kDa.</text>
</comment>
<name>NF05_NAEFO</name>
<keyword id="KW-0903">Direct protein sequencing</keyword>
<organism>
    <name type="scientific">Naegleria fowleri</name>
    <name type="common">Brain eating amoeba</name>
    <dbReference type="NCBI Taxonomy" id="5763"/>
    <lineage>
        <taxon>Eukaryota</taxon>
        <taxon>Discoba</taxon>
        <taxon>Heterolobosea</taxon>
        <taxon>Tetramitia</taxon>
        <taxon>Eutetramitia</taxon>
        <taxon>Vahlkampfiidae</taxon>
        <taxon>Naegleria</taxon>
    </lineage>
</organism>
<sequence>AGKARKQLSKNEDTKLKEQYIXD</sequence>
<feature type="chain" id="PRO_0000055487" description="Unknown protein NF005 from 2D-PAGE">
    <location>
        <begin position="1"/>
        <end position="23" status="greater than"/>
    </location>
</feature>
<feature type="region of interest" description="Disordered" evidence="1">
    <location>
        <begin position="1"/>
        <end position="23"/>
    </location>
</feature>
<feature type="compositionally biased region" description="Basic and acidic residues" evidence="1">
    <location>
        <begin position="9"/>
        <end position="23"/>
    </location>
</feature>
<feature type="non-terminal residue">
    <location>
        <position position="23"/>
    </location>
</feature>
<protein>
    <recommendedName>
        <fullName>Unknown protein NF005 from 2D-PAGE</fullName>
    </recommendedName>
</protein>
<accession>P83602</accession>
<evidence type="ECO:0000256" key="1">
    <source>
        <dbReference type="SAM" id="MobiDB-lite"/>
    </source>
</evidence>
<reference key="1">
    <citation type="submission" date="2003-05" db="UniProtKB">
        <title>Comparative study of protein profiles on pathogenic and nonpathogenic Naegleria species by 2D-PAGE.</title>
        <authorList>
            <person name="Omura M."/>
            <person name="Furushima-Shimogawara R."/>
            <person name="Izumiyama S."/>
            <person name="Endo T."/>
        </authorList>
    </citation>
    <scope>PROTEIN SEQUENCE</scope>
    <source>
        <strain>ATCC 30214 / Nf 66</strain>
    </source>
</reference>
<proteinExistence type="evidence at protein level"/>